<name>APOA1_LEPWE</name>
<reference key="1">
    <citation type="submission" date="2013-04" db="EMBL/GenBank/DDBJ databases">
        <authorList>
            <person name="Di Palma F."/>
            <person name="Alfoldi J."/>
            <person name="Johnson J."/>
            <person name="Berlin A."/>
            <person name="Gnerre S."/>
            <person name="Jaffe D."/>
            <person name="MacCallum I."/>
            <person name="Young S."/>
            <person name="Walker B.J."/>
            <person name="Lindblad-Toh K."/>
        </authorList>
    </citation>
    <scope>NUCLEOTIDE SEQUENCE [LARGE SCALE GENOMIC DNA]</scope>
</reference>
<reference key="2">
    <citation type="unpublished observations" date="2014-12">
        <authorList>
            <person name="Puppione D.L."/>
        </authorList>
    </citation>
    <scope>IDENTIFICATION</scope>
</reference>
<sequence length="266" mass="30311">MKAVVLTLAVLFLTGSQARHFWQQDEPQSPWDRVKDLATVYVDVVKDGGRDYVAQFESSALGKQLNLKLLDNWDSLSSTVAKLREQIGPVTQEFWDNLEKETEVLRQEMNKDLEEVKKKVQPYLDEFQSKWHEEVELYRQKVAPLGAELREGARQKLQELQEKLSPLGEELRDRARTHVDALRAQLAPYGEQLRERLAARLQALKEGGGAALTEYRAKASEHLSALREKAKPALEDLRQGLLPVLENFRVSLLAAVDEATKKLNSQ</sequence>
<dbReference type="EMBL" id="APMU01110376">
    <property type="status" value="NOT_ANNOTATED_CDS"/>
    <property type="molecule type" value="Genomic_DNA"/>
</dbReference>
<dbReference type="RefSeq" id="XP_006743516.1">
    <property type="nucleotide sequence ID" value="XM_006743453.2"/>
</dbReference>
<dbReference type="RefSeq" id="XP_030895142.1">
    <property type="nucleotide sequence ID" value="XM_031039282.1"/>
</dbReference>
<dbReference type="SMR" id="P0DMS4"/>
<dbReference type="STRING" id="9713.P0DMS4"/>
<dbReference type="GeneID" id="102732504"/>
<dbReference type="KEGG" id="lww:102732504"/>
<dbReference type="CTD" id="335"/>
<dbReference type="OrthoDB" id="8727817at2759"/>
<dbReference type="Proteomes" id="UP000245341">
    <property type="component" value="Unplaced"/>
</dbReference>
<dbReference type="GO" id="GO:0042627">
    <property type="term" value="C:chylomicron"/>
    <property type="evidence" value="ECO:0007669"/>
    <property type="project" value="TreeGrafter"/>
</dbReference>
<dbReference type="GO" id="GO:1903561">
    <property type="term" value="C:extracellular vesicle"/>
    <property type="evidence" value="ECO:0007669"/>
    <property type="project" value="TreeGrafter"/>
</dbReference>
<dbReference type="GO" id="GO:0034364">
    <property type="term" value="C:high-density lipoprotein particle"/>
    <property type="evidence" value="ECO:0007669"/>
    <property type="project" value="UniProtKB-KW"/>
</dbReference>
<dbReference type="GO" id="GO:0034362">
    <property type="term" value="C:low-density lipoprotein particle"/>
    <property type="evidence" value="ECO:0007669"/>
    <property type="project" value="TreeGrafter"/>
</dbReference>
<dbReference type="GO" id="GO:0034361">
    <property type="term" value="C:very-low-density lipoprotein particle"/>
    <property type="evidence" value="ECO:0007669"/>
    <property type="project" value="TreeGrafter"/>
</dbReference>
<dbReference type="GO" id="GO:0120020">
    <property type="term" value="F:cholesterol transfer activity"/>
    <property type="evidence" value="ECO:0007669"/>
    <property type="project" value="TreeGrafter"/>
</dbReference>
<dbReference type="GO" id="GO:0060228">
    <property type="term" value="F:phosphatidylcholine-sterol O-acyltransferase activator activity"/>
    <property type="evidence" value="ECO:0007669"/>
    <property type="project" value="TreeGrafter"/>
</dbReference>
<dbReference type="GO" id="GO:0005543">
    <property type="term" value="F:phospholipid binding"/>
    <property type="evidence" value="ECO:0007669"/>
    <property type="project" value="TreeGrafter"/>
</dbReference>
<dbReference type="GO" id="GO:0042803">
    <property type="term" value="F:protein homodimerization activity"/>
    <property type="evidence" value="ECO:0000250"/>
    <property type="project" value="UniProtKB"/>
</dbReference>
<dbReference type="GO" id="GO:0055090">
    <property type="term" value="P:acylglycerol homeostasis"/>
    <property type="evidence" value="ECO:0007669"/>
    <property type="project" value="TreeGrafter"/>
</dbReference>
<dbReference type="GO" id="GO:0033344">
    <property type="term" value="P:cholesterol efflux"/>
    <property type="evidence" value="ECO:0007669"/>
    <property type="project" value="TreeGrafter"/>
</dbReference>
<dbReference type="GO" id="GO:0008203">
    <property type="term" value="P:cholesterol metabolic process"/>
    <property type="evidence" value="ECO:0007669"/>
    <property type="project" value="UniProtKB-KW"/>
</dbReference>
<dbReference type="GO" id="GO:0042157">
    <property type="term" value="P:lipoprotein metabolic process"/>
    <property type="evidence" value="ECO:0007669"/>
    <property type="project" value="InterPro"/>
</dbReference>
<dbReference type="GO" id="GO:0033700">
    <property type="term" value="P:phospholipid efflux"/>
    <property type="evidence" value="ECO:0007669"/>
    <property type="project" value="TreeGrafter"/>
</dbReference>
<dbReference type="GO" id="GO:0010875">
    <property type="term" value="P:positive regulation of cholesterol efflux"/>
    <property type="evidence" value="ECO:0000250"/>
    <property type="project" value="UniProtKB"/>
</dbReference>
<dbReference type="GO" id="GO:0050766">
    <property type="term" value="P:positive regulation of phagocytosis"/>
    <property type="evidence" value="ECO:0000250"/>
    <property type="project" value="UniProtKB"/>
</dbReference>
<dbReference type="GO" id="GO:1902995">
    <property type="term" value="P:positive regulation of phospholipid efflux"/>
    <property type="evidence" value="ECO:0000250"/>
    <property type="project" value="UniProtKB"/>
</dbReference>
<dbReference type="GO" id="GO:0050821">
    <property type="term" value="P:protein stabilization"/>
    <property type="evidence" value="ECO:0000250"/>
    <property type="project" value="UniProtKB"/>
</dbReference>
<dbReference type="FunFam" id="1.20.120.20:FF:000001">
    <property type="entry name" value="Apolipoprotein A-I"/>
    <property type="match status" value="1"/>
</dbReference>
<dbReference type="FunFam" id="1.20.5.20:FF:000001">
    <property type="entry name" value="apolipoprotein A-I"/>
    <property type="match status" value="1"/>
</dbReference>
<dbReference type="Gene3D" id="1.20.5.20">
    <property type="match status" value="1"/>
</dbReference>
<dbReference type="Gene3D" id="6.10.140.380">
    <property type="match status" value="1"/>
</dbReference>
<dbReference type="Gene3D" id="1.20.120.20">
    <property type="entry name" value="Apolipoprotein"/>
    <property type="match status" value="1"/>
</dbReference>
<dbReference type="InterPro" id="IPR000074">
    <property type="entry name" value="ApoA_E"/>
</dbReference>
<dbReference type="InterPro" id="IPR050163">
    <property type="entry name" value="Apolipoprotein_A1/A4/E"/>
</dbReference>
<dbReference type="PANTHER" id="PTHR18976">
    <property type="entry name" value="APOLIPOPROTEIN"/>
    <property type="match status" value="1"/>
</dbReference>
<dbReference type="PANTHER" id="PTHR18976:SF11">
    <property type="entry name" value="APOLIPOPROTEIN A-I"/>
    <property type="match status" value="1"/>
</dbReference>
<dbReference type="Pfam" id="PF01442">
    <property type="entry name" value="Apolipoprotein"/>
    <property type="match status" value="1"/>
</dbReference>
<dbReference type="SUPFAM" id="SSF58113">
    <property type="entry name" value="Apolipoprotein A-I"/>
    <property type="match status" value="1"/>
</dbReference>
<evidence type="ECO:0000250" key="1"/>
<evidence type="ECO:0000250" key="2">
    <source>
        <dbReference type="UniProtKB" id="G5BQH5"/>
    </source>
</evidence>
<evidence type="ECO:0000250" key="3">
    <source>
        <dbReference type="UniProtKB" id="P02647"/>
    </source>
</evidence>
<evidence type="ECO:0000250" key="4">
    <source>
        <dbReference type="UniProtKB" id="P02648"/>
    </source>
</evidence>
<evidence type="ECO:0000250" key="5">
    <source>
        <dbReference type="UniProtKB" id="P04639"/>
    </source>
</evidence>
<evidence type="ECO:0000255" key="6"/>
<evidence type="ECO:0000305" key="7"/>
<keyword id="KW-0153">Cholesterol metabolism</keyword>
<keyword id="KW-0325">Glycoprotein</keyword>
<keyword id="KW-0345">HDL</keyword>
<keyword id="KW-0443">Lipid metabolism</keyword>
<keyword id="KW-0445">Lipid transport</keyword>
<keyword id="KW-0449">Lipoprotein</keyword>
<keyword id="KW-0558">Oxidation</keyword>
<keyword id="KW-0564">Palmitate</keyword>
<keyword id="KW-0597">Phosphoprotein</keyword>
<keyword id="KW-1185">Reference proteome</keyword>
<keyword id="KW-0677">Repeat</keyword>
<keyword id="KW-0964">Secreted</keyword>
<keyword id="KW-0732">Signal</keyword>
<keyword id="KW-0753">Steroid metabolism</keyword>
<keyword id="KW-1207">Sterol metabolism</keyword>
<keyword id="KW-0813">Transport</keyword>
<organism>
    <name type="scientific">Leptonychotes weddellii</name>
    <name type="common">Weddell seal</name>
    <name type="synonym">Otaria weddellii</name>
    <dbReference type="NCBI Taxonomy" id="9713"/>
    <lineage>
        <taxon>Eukaryota</taxon>
        <taxon>Metazoa</taxon>
        <taxon>Chordata</taxon>
        <taxon>Craniata</taxon>
        <taxon>Vertebrata</taxon>
        <taxon>Euteleostomi</taxon>
        <taxon>Mammalia</taxon>
        <taxon>Eutheria</taxon>
        <taxon>Laurasiatheria</taxon>
        <taxon>Carnivora</taxon>
        <taxon>Caniformia</taxon>
        <taxon>Pinnipedia</taxon>
        <taxon>Phocidae</taxon>
        <taxon>Monachinae</taxon>
        <taxon>Lobodontini</taxon>
        <taxon>Leptonychotes</taxon>
    </lineage>
</organism>
<proteinExistence type="inferred from homology"/>
<comment type="function">
    <text evidence="3">Participates in the reverse transport of cholesterol from tissues to the liver for excretion by promoting cholesterol efflux from tissues and by acting as a cofactor for the lecithin cholesterol acyltransferase (LCAT). As part of the SPAP complex, activates spermatozoa motility.</text>
</comment>
<comment type="subunit">
    <text evidence="2 3 5">Homodimer (By similarity). Interacts with APOA1BP and CLU. Component of a sperm activating protein complex (SPAP), consisting of APOA1, an immunoglobulin heavy chain, an immunoglobulin light chain and albumin. Interacts with NDRG1. Interacts with SCGB3A2 (By similarity). Interacts with NAXE and YJEFN3 (By similarity).</text>
</comment>
<comment type="subcellular location">
    <subcellularLocation>
        <location evidence="3">Secreted</location>
    </subcellularLocation>
</comment>
<comment type="PTM">
    <text evidence="4">Glycosylated.</text>
</comment>
<comment type="PTM">
    <text evidence="4">Palmitoylated.</text>
</comment>
<comment type="PTM">
    <text evidence="1">Phosphorylation sites are present in the extracellular medium.</text>
</comment>
<comment type="similarity">
    <text evidence="7">Belongs to the apolipoprotein A1/A4/E family.</text>
</comment>
<gene>
    <name type="primary">APOA1</name>
</gene>
<feature type="signal peptide" evidence="6">
    <location>
        <begin position="1"/>
        <end position="18"/>
    </location>
</feature>
<feature type="chain" id="PRO_0000432004" description="Proapolipoprotein A-I">
    <location>
        <begin position="19"/>
        <end position="266"/>
    </location>
</feature>
<feature type="chain" id="PRO_0000432005" description="Apolipoprotein A-I">
    <location>
        <begin position="25"/>
        <end position="266"/>
    </location>
</feature>
<feature type="chain" id="PRO_0000432006" description="Truncated apolipoprotein A-I" evidence="3">
    <location>
        <begin position="25"/>
        <end position="265"/>
    </location>
</feature>
<feature type="repeat" description="1">
    <location>
        <begin position="67"/>
        <end position="88"/>
    </location>
</feature>
<feature type="repeat" description="2">
    <location>
        <begin position="89"/>
        <end position="110"/>
    </location>
</feature>
<feature type="repeat" description="3; half-length">
    <location>
        <begin position="111"/>
        <end position="121"/>
    </location>
</feature>
<feature type="repeat" description="4">
    <location>
        <begin position="122"/>
        <end position="143"/>
    </location>
</feature>
<feature type="repeat" description="5">
    <location>
        <begin position="144"/>
        <end position="165"/>
    </location>
</feature>
<feature type="repeat" description="6">
    <location>
        <begin position="166"/>
        <end position="187"/>
    </location>
</feature>
<feature type="repeat" description="7">
    <location>
        <begin position="188"/>
        <end position="209"/>
    </location>
</feature>
<feature type="repeat" description="8">
    <location>
        <begin position="210"/>
        <end position="231"/>
    </location>
</feature>
<feature type="repeat" description="9; half-length">
    <location>
        <begin position="232"/>
        <end position="242"/>
    </location>
</feature>
<feature type="repeat" description="10">
    <location>
        <begin position="243"/>
        <end position="266"/>
    </location>
</feature>
<feature type="region of interest" description="10 X approximate tandem repeats">
    <location>
        <begin position="67"/>
        <end position="266"/>
    </location>
</feature>
<feature type="modified residue" description="Methionine sulfoxide" evidence="3">
    <location>
        <position position="109"/>
    </location>
</feature>
<accession>P0DMS4</accession>
<protein>
    <recommendedName>
        <fullName>Apolipoprotein A-I</fullName>
        <shortName>Apo-AI</shortName>
        <shortName>ApoA-I</shortName>
    </recommendedName>
    <alternativeName>
        <fullName>Apolipoprotein A1</fullName>
    </alternativeName>
    <component>
        <recommendedName>
            <fullName>Proapolipoprotein A-I</fullName>
            <shortName>ProapoA-I</shortName>
        </recommendedName>
    </component>
    <component>
        <recommendedName>
            <fullName>Truncated apolipoprotein A-I</fullName>
        </recommendedName>
    </component>
</protein>